<keyword id="KW-0456">Lyase</keyword>
<organism>
    <name type="scientific">Escherichia coli O81 (strain ED1a)</name>
    <dbReference type="NCBI Taxonomy" id="585397"/>
    <lineage>
        <taxon>Bacteria</taxon>
        <taxon>Pseudomonadati</taxon>
        <taxon>Pseudomonadota</taxon>
        <taxon>Gammaproteobacteria</taxon>
        <taxon>Enterobacterales</taxon>
        <taxon>Enterobacteriaceae</taxon>
        <taxon>Escherichia</taxon>
    </lineage>
</organism>
<name>MGSA_ECO81</name>
<comment type="function">
    <text evidence="1">Catalyzes the formation of methylglyoxal from dihydroxyacetone phosphate.</text>
</comment>
<comment type="catalytic activity">
    <reaction evidence="1">
        <text>dihydroxyacetone phosphate = methylglyoxal + phosphate</text>
        <dbReference type="Rhea" id="RHEA:17937"/>
        <dbReference type="ChEBI" id="CHEBI:17158"/>
        <dbReference type="ChEBI" id="CHEBI:43474"/>
        <dbReference type="ChEBI" id="CHEBI:57642"/>
        <dbReference type="EC" id="4.2.3.3"/>
    </reaction>
</comment>
<comment type="similarity">
    <text evidence="1">Belongs to the methylglyoxal synthase family.</text>
</comment>
<dbReference type="EC" id="4.2.3.3" evidence="1"/>
<dbReference type="EMBL" id="CU928162">
    <property type="protein sequence ID" value="CAR07188.1"/>
    <property type="molecule type" value="Genomic_DNA"/>
</dbReference>
<dbReference type="RefSeq" id="WP_001295939.1">
    <property type="nucleotide sequence ID" value="NC_011745.1"/>
</dbReference>
<dbReference type="SMR" id="B7MS74"/>
<dbReference type="KEGG" id="ecq:ECED1_0986"/>
<dbReference type="HOGENOM" id="CLU_120420_0_1_6"/>
<dbReference type="Proteomes" id="UP000000748">
    <property type="component" value="Chromosome"/>
</dbReference>
<dbReference type="GO" id="GO:0005829">
    <property type="term" value="C:cytosol"/>
    <property type="evidence" value="ECO:0007669"/>
    <property type="project" value="TreeGrafter"/>
</dbReference>
<dbReference type="GO" id="GO:0008929">
    <property type="term" value="F:methylglyoxal synthase activity"/>
    <property type="evidence" value="ECO:0007669"/>
    <property type="project" value="UniProtKB-UniRule"/>
</dbReference>
<dbReference type="GO" id="GO:0019242">
    <property type="term" value="P:methylglyoxal biosynthetic process"/>
    <property type="evidence" value="ECO:0007669"/>
    <property type="project" value="UniProtKB-UniRule"/>
</dbReference>
<dbReference type="CDD" id="cd01422">
    <property type="entry name" value="MGS"/>
    <property type="match status" value="1"/>
</dbReference>
<dbReference type="FunFam" id="3.40.50.1380:FF:000002">
    <property type="entry name" value="Methylglyoxal synthase"/>
    <property type="match status" value="1"/>
</dbReference>
<dbReference type="Gene3D" id="3.40.50.1380">
    <property type="entry name" value="Methylglyoxal synthase-like domain"/>
    <property type="match status" value="1"/>
</dbReference>
<dbReference type="HAMAP" id="MF_00549">
    <property type="entry name" value="Methylglyoxal_synth"/>
    <property type="match status" value="1"/>
</dbReference>
<dbReference type="InterPro" id="IPR004363">
    <property type="entry name" value="Methylgl_synth"/>
</dbReference>
<dbReference type="InterPro" id="IPR018148">
    <property type="entry name" value="Methylglyoxal_synth_AS"/>
</dbReference>
<dbReference type="InterPro" id="IPR011607">
    <property type="entry name" value="MGS-like_dom"/>
</dbReference>
<dbReference type="InterPro" id="IPR036914">
    <property type="entry name" value="MGS-like_dom_sf"/>
</dbReference>
<dbReference type="NCBIfam" id="TIGR00160">
    <property type="entry name" value="MGSA"/>
    <property type="match status" value="1"/>
</dbReference>
<dbReference type="NCBIfam" id="NF003559">
    <property type="entry name" value="PRK05234.1"/>
    <property type="match status" value="1"/>
</dbReference>
<dbReference type="PANTHER" id="PTHR30492">
    <property type="entry name" value="METHYLGLYOXAL SYNTHASE"/>
    <property type="match status" value="1"/>
</dbReference>
<dbReference type="PANTHER" id="PTHR30492:SF0">
    <property type="entry name" value="METHYLGLYOXAL SYNTHASE"/>
    <property type="match status" value="1"/>
</dbReference>
<dbReference type="Pfam" id="PF02142">
    <property type="entry name" value="MGS"/>
    <property type="match status" value="1"/>
</dbReference>
<dbReference type="PIRSF" id="PIRSF006614">
    <property type="entry name" value="Methylglyox_syn"/>
    <property type="match status" value="1"/>
</dbReference>
<dbReference type="SMART" id="SM00851">
    <property type="entry name" value="MGS"/>
    <property type="match status" value="1"/>
</dbReference>
<dbReference type="SUPFAM" id="SSF52335">
    <property type="entry name" value="Methylglyoxal synthase-like"/>
    <property type="match status" value="1"/>
</dbReference>
<dbReference type="PROSITE" id="PS01335">
    <property type="entry name" value="METHYLGLYOXAL_SYNTH"/>
    <property type="match status" value="1"/>
</dbReference>
<dbReference type="PROSITE" id="PS51855">
    <property type="entry name" value="MGS"/>
    <property type="match status" value="1"/>
</dbReference>
<gene>
    <name evidence="1" type="primary">mgsA</name>
    <name type="ordered locus">ECED1_0986</name>
</gene>
<accession>B7MS74</accession>
<feature type="chain" id="PRO_1000146626" description="Methylglyoxal synthase">
    <location>
        <begin position="1"/>
        <end position="152"/>
    </location>
</feature>
<feature type="domain" description="MGS-like" evidence="1">
    <location>
        <begin position="6"/>
        <end position="152"/>
    </location>
</feature>
<feature type="active site" description="Proton donor/acceptor" evidence="1">
    <location>
        <position position="71"/>
    </location>
</feature>
<feature type="binding site" evidence="1">
    <location>
        <position position="19"/>
    </location>
    <ligand>
        <name>substrate</name>
    </ligand>
</feature>
<feature type="binding site" evidence="1">
    <location>
        <position position="23"/>
    </location>
    <ligand>
        <name>substrate</name>
    </ligand>
</feature>
<feature type="binding site" evidence="1">
    <location>
        <begin position="45"/>
        <end position="48"/>
    </location>
    <ligand>
        <name>substrate</name>
    </ligand>
</feature>
<feature type="binding site" evidence="1">
    <location>
        <begin position="65"/>
        <end position="66"/>
    </location>
    <ligand>
        <name>substrate</name>
    </ligand>
</feature>
<feature type="binding site" evidence="1">
    <location>
        <position position="98"/>
    </location>
    <ligand>
        <name>substrate</name>
    </ligand>
</feature>
<protein>
    <recommendedName>
        <fullName evidence="1">Methylglyoxal synthase</fullName>
        <shortName evidence="1">MGS</shortName>
        <ecNumber evidence="1">4.2.3.3</ecNumber>
    </recommendedName>
</protein>
<reference key="1">
    <citation type="journal article" date="2009" name="PLoS Genet.">
        <title>Organised genome dynamics in the Escherichia coli species results in highly diverse adaptive paths.</title>
        <authorList>
            <person name="Touchon M."/>
            <person name="Hoede C."/>
            <person name="Tenaillon O."/>
            <person name="Barbe V."/>
            <person name="Baeriswyl S."/>
            <person name="Bidet P."/>
            <person name="Bingen E."/>
            <person name="Bonacorsi S."/>
            <person name="Bouchier C."/>
            <person name="Bouvet O."/>
            <person name="Calteau A."/>
            <person name="Chiapello H."/>
            <person name="Clermont O."/>
            <person name="Cruveiller S."/>
            <person name="Danchin A."/>
            <person name="Diard M."/>
            <person name="Dossat C."/>
            <person name="Karoui M.E."/>
            <person name="Frapy E."/>
            <person name="Garry L."/>
            <person name="Ghigo J.M."/>
            <person name="Gilles A.M."/>
            <person name="Johnson J."/>
            <person name="Le Bouguenec C."/>
            <person name="Lescat M."/>
            <person name="Mangenot S."/>
            <person name="Martinez-Jehanne V."/>
            <person name="Matic I."/>
            <person name="Nassif X."/>
            <person name="Oztas S."/>
            <person name="Petit M.A."/>
            <person name="Pichon C."/>
            <person name="Rouy Z."/>
            <person name="Ruf C.S."/>
            <person name="Schneider D."/>
            <person name="Tourret J."/>
            <person name="Vacherie B."/>
            <person name="Vallenet D."/>
            <person name="Medigue C."/>
            <person name="Rocha E.P.C."/>
            <person name="Denamur E."/>
        </authorList>
    </citation>
    <scope>NUCLEOTIDE SEQUENCE [LARGE SCALE GENOMIC DNA]</scope>
    <source>
        <strain>ED1a</strain>
    </source>
</reference>
<sequence>MELTTRTLPSRKHIALVAHDHCKQMLMSWVERHQPLLEQHVLYATGTTGNLISRATGMNVNAMLSGPMGGDQQVGALISEGKIDVLIFFWDPLNAVPHDPDVKALLRLATVWNIPVATNVATADFIIQSPHFNDAVDILIPDYQRYLADRLK</sequence>
<evidence type="ECO:0000255" key="1">
    <source>
        <dbReference type="HAMAP-Rule" id="MF_00549"/>
    </source>
</evidence>
<proteinExistence type="inferred from homology"/>